<accession>Q6F873</accession>
<evidence type="ECO:0000255" key="1">
    <source>
        <dbReference type="HAMAP-Rule" id="MF_00283"/>
    </source>
</evidence>
<protein>
    <recommendedName>
        <fullName evidence="1">Phenylalanine--tRNA ligase beta subunit</fullName>
        <ecNumber evidence="1">6.1.1.20</ecNumber>
    </recommendedName>
    <alternativeName>
        <fullName evidence="1">Phenylalanyl-tRNA synthetase beta subunit</fullName>
        <shortName evidence="1">PheRS</shortName>
    </alternativeName>
</protein>
<proteinExistence type="inferred from homology"/>
<feature type="chain" id="PRO_0000126830" description="Phenylalanine--tRNA ligase beta subunit">
    <location>
        <begin position="1"/>
        <end position="793"/>
    </location>
</feature>
<feature type="domain" description="tRNA-binding" evidence="1">
    <location>
        <begin position="39"/>
        <end position="148"/>
    </location>
</feature>
<feature type="domain" description="B5" evidence="1">
    <location>
        <begin position="400"/>
        <end position="476"/>
    </location>
</feature>
<feature type="domain" description="FDX-ACB" evidence="1">
    <location>
        <begin position="698"/>
        <end position="791"/>
    </location>
</feature>
<feature type="binding site" evidence="1">
    <location>
        <position position="454"/>
    </location>
    <ligand>
        <name>Mg(2+)</name>
        <dbReference type="ChEBI" id="CHEBI:18420"/>
        <note>shared with alpha subunit</note>
    </ligand>
</feature>
<feature type="binding site" evidence="1">
    <location>
        <position position="460"/>
    </location>
    <ligand>
        <name>Mg(2+)</name>
        <dbReference type="ChEBI" id="CHEBI:18420"/>
        <note>shared with alpha subunit</note>
    </ligand>
</feature>
<feature type="binding site" evidence="1">
    <location>
        <position position="463"/>
    </location>
    <ligand>
        <name>Mg(2+)</name>
        <dbReference type="ChEBI" id="CHEBI:18420"/>
        <note>shared with alpha subunit</note>
    </ligand>
</feature>
<feature type="binding site" evidence="1">
    <location>
        <position position="464"/>
    </location>
    <ligand>
        <name>Mg(2+)</name>
        <dbReference type="ChEBI" id="CHEBI:18420"/>
        <note>shared with alpha subunit</note>
    </ligand>
</feature>
<dbReference type="EC" id="6.1.1.20" evidence="1"/>
<dbReference type="EMBL" id="CR543861">
    <property type="protein sequence ID" value="CAG69742.1"/>
    <property type="molecule type" value="Genomic_DNA"/>
</dbReference>
<dbReference type="RefSeq" id="WP_004924546.1">
    <property type="nucleotide sequence ID" value="NC_005966.1"/>
</dbReference>
<dbReference type="SMR" id="Q6F873"/>
<dbReference type="STRING" id="202950.GCA_001485005_02702"/>
<dbReference type="GeneID" id="45235264"/>
<dbReference type="KEGG" id="aci:ACIAD3041"/>
<dbReference type="eggNOG" id="COG0072">
    <property type="taxonomic scope" value="Bacteria"/>
</dbReference>
<dbReference type="HOGENOM" id="CLU_016891_0_0_6"/>
<dbReference type="OrthoDB" id="9805455at2"/>
<dbReference type="BioCyc" id="ASP62977:ACIAD_RS13745-MONOMER"/>
<dbReference type="Proteomes" id="UP000000430">
    <property type="component" value="Chromosome"/>
</dbReference>
<dbReference type="GO" id="GO:0009328">
    <property type="term" value="C:phenylalanine-tRNA ligase complex"/>
    <property type="evidence" value="ECO:0007669"/>
    <property type="project" value="TreeGrafter"/>
</dbReference>
<dbReference type="GO" id="GO:0005524">
    <property type="term" value="F:ATP binding"/>
    <property type="evidence" value="ECO:0007669"/>
    <property type="project" value="UniProtKB-UniRule"/>
</dbReference>
<dbReference type="GO" id="GO:0000287">
    <property type="term" value="F:magnesium ion binding"/>
    <property type="evidence" value="ECO:0007669"/>
    <property type="project" value="UniProtKB-UniRule"/>
</dbReference>
<dbReference type="GO" id="GO:0004826">
    <property type="term" value="F:phenylalanine-tRNA ligase activity"/>
    <property type="evidence" value="ECO:0007669"/>
    <property type="project" value="UniProtKB-UniRule"/>
</dbReference>
<dbReference type="GO" id="GO:0000049">
    <property type="term" value="F:tRNA binding"/>
    <property type="evidence" value="ECO:0007669"/>
    <property type="project" value="UniProtKB-KW"/>
</dbReference>
<dbReference type="GO" id="GO:0006432">
    <property type="term" value="P:phenylalanyl-tRNA aminoacylation"/>
    <property type="evidence" value="ECO:0007669"/>
    <property type="project" value="UniProtKB-UniRule"/>
</dbReference>
<dbReference type="CDD" id="cd00769">
    <property type="entry name" value="PheRS_beta_core"/>
    <property type="match status" value="1"/>
</dbReference>
<dbReference type="CDD" id="cd02796">
    <property type="entry name" value="tRNA_bind_bactPheRS"/>
    <property type="match status" value="1"/>
</dbReference>
<dbReference type="FunFam" id="2.40.50.140:FF:000045">
    <property type="entry name" value="Phenylalanine--tRNA ligase beta subunit"/>
    <property type="match status" value="1"/>
</dbReference>
<dbReference type="FunFam" id="3.30.56.10:FF:000002">
    <property type="entry name" value="Phenylalanine--tRNA ligase beta subunit"/>
    <property type="match status" value="1"/>
</dbReference>
<dbReference type="FunFam" id="3.30.70.380:FF:000001">
    <property type="entry name" value="Phenylalanine--tRNA ligase beta subunit"/>
    <property type="match status" value="1"/>
</dbReference>
<dbReference type="FunFam" id="3.30.930.10:FF:000022">
    <property type="entry name" value="Phenylalanine--tRNA ligase beta subunit"/>
    <property type="match status" value="1"/>
</dbReference>
<dbReference type="FunFam" id="3.50.40.10:FF:000001">
    <property type="entry name" value="Phenylalanine--tRNA ligase beta subunit"/>
    <property type="match status" value="1"/>
</dbReference>
<dbReference type="Gene3D" id="3.30.56.10">
    <property type="match status" value="2"/>
</dbReference>
<dbReference type="Gene3D" id="3.30.930.10">
    <property type="entry name" value="Bira Bifunctional Protein, Domain 2"/>
    <property type="match status" value="1"/>
</dbReference>
<dbReference type="Gene3D" id="3.30.70.380">
    <property type="entry name" value="Ferrodoxin-fold anticodon-binding domain"/>
    <property type="match status" value="1"/>
</dbReference>
<dbReference type="Gene3D" id="2.40.50.140">
    <property type="entry name" value="Nucleic acid-binding proteins"/>
    <property type="match status" value="1"/>
</dbReference>
<dbReference type="Gene3D" id="3.50.40.10">
    <property type="entry name" value="Phenylalanyl-trna Synthetase, Chain B, domain 3"/>
    <property type="match status" value="1"/>
</dbReference>
<dbReference type="HAMAP" id="MF_00283">
    <property type="entry name" value="Phe_tRNA_synth_beta1"/>
    <property type="match status" value="1"/>
</dbReference>
<dbReference type="InterPro" id="IPR045864">
    <property type="entry name" value="aa-tRNA-synth_II/BPL/LPL"/>
</dbReference>
<dbReference type="InterPro" id="IPR005146">
    <property type="entry name" value="B3/B4_tRNA-bd"/>
</dbReference>
<dbReference type="InterPro" id="IPR009061">
    <property type="entry name" value="DNA-bd_dom_put_sf"/>
</dbReference>
<dbReference type="InterPro" id="IPR005121">
    <property type="entry name" value="Fdx_antiC-bd"/>
</dbReference>
<dbReference type="InterPro" id="IPR036690">
    <property type="entry name" value="Fdx_antiC-bd_sf"/>
</dbReference>
<dbReference type="InterPro" id="IPR012340">
    <property type="entry name" value="NA-bd_OB-fold"/>
</dbReference>
<dbReference type="InterPro" id="IPR045060">
    <property type="entry name" value="Phe-tRNA-ligase_IIc_bsu"/>
</dbReference>
<dbReference type="InterPro" id="IPR004532">
    <property type="entry name" value="Phe-tRNA-ligase_IIc_bsu_bact"/>
</dbReference>
<dbReference type="InterPro" id="IPR020825">
    <property type="entry name" value="Phe-tRNA_synthase-like_B3/B4"/>
</dbReference>
<dbReference type="InterPro" id="IPR041616">
    <property type="entry name" value="PheRS_beta_core"/>
</dbReference>
<dbReference type="InterPro" id="IPR002547">
    <property type="entry name" value="tRNA-bd_dom"/>
</dbReference>
<dbReference type="InterPro" id="IPR033714">
    <property type="entry name" value="tRNA_bind_bactPheRS"/>
</dbReference>
<dbReference type="InterPro" id="IPR005147">
    <property type="entry name" value="tRNA_synthase_B5-dom"/>
</dbReference>
<dbReference type="NCBIfam" id="TIGR00472">
    <property type="entry name" value="pheT_bact"/>
    <property type="match status" value="1"/>
</dbReference>
<dbReference type="NCBIfam" id="NF045760">
    <property type="entry name" value="YtpR"/>
    <property type="match status" value="1"/>
</dbReference>
<dbReference type="PANTHER" id="PTHR10947:SF0">
    <property type="entry name" value="PHENYLALANINE--TRNA LIGASE BETA SUBUNIT"/>
    <property type="match status" value="1"/>
</dbReference>
<dbReference type="PANTHER" id="PTHR10947">
    <property type="entry name" value="PHENYLALANYL-TRNA SYNTHETASE BETA CHAIN AND LEUCINE-RICH REPEAT-CONTAINING PROTEIN 47"/>
    <property type="match status" value="1"/>
</dbReference>
<dbReference type="Pfam" id="PF03483">
    <property type="entry name" value="B3_4"/>
    <property type="match status" value="1"/>
</dbReference>
<dbReference type="Pfam" id="PF03484">
    <property type="entry name" value="B5"/>
    <property type="match status" value="1"/>
</dbReference>
<dbReference type="Pfam" id="PF03147">
    <property type="entry name" value="FDX-ACB"/>
    <property type="match status" value="1"/>
</dbReference>
<dbReference type="Pfam" id="PF01588">
    <property type="entry name" value="tRNA_bind"/>
    <property type="match status" value="1"/>
</dbReference>
<dbReference type="Pfam" id="PF17759">
    <property type="entry name" value="tRNA_synthFbeta"/>
    <property type="match status" value="1"/>
</dbReference>
<dbReference type="SMART" id="SM00873">
    <property type="entry name" value="B3_4"/>
    <property type="match status" value="1"/>
</dbReference>
<dbReference type="SMART" id="SM00874">
    <property type="entry name" value="B5"/>
    <property type="match status" value="1"/>
</dbReference>
<dbReference type="SMART" id="SM00896">
    <property type="entry name" value="FDX-ACB"/>
    <property type="match status" value="1"/>
</dbReference>
<dbReference type="SUPFAM" id="SSF54991">
    <property type="entry name" value="Anticodon-binding domain of PheRS"/>
    <property type="match status" value="1"/>
</dbReference>
<dbReference type="SUPFAM" id="SSF55681">
    <property type="entry name" value="Class II aaRS and biotin synthetases"/>
    <property type="match status" value="1"/>
</dbReference>
<dbReference type="SUPFAM" id="SSF50249">
    <property type="entry name" value="Nucleic acid-binding proteins"/>
    <property type="match status" value="1"/>
</dbReference>
<dbReference type="SUPFAM" id="SSF56037">
    <property type="entry name" value="PheT/TilS domain"/>
    <property type="match status" value="1"/>
</dbReference>
<dbReference type="SUPFAM" id="SSF46955">
    <property type="entry name" value="Putative DNA-binding domain"/>
    <property type="match status" value="1"/>
</dbReference>
<dbReference type="PROSITE" id="PS51483">
    <property type="entry name" value="B5"/>
    <property type="match status" value="1"/>
</dbReference>
<dbReference type="PROSITE" id="PS51447">
    <property type="entry name" value="FDX_ACB"/>
    <property type="match status" value="1"/>
</dbReference>
<dbReference type="PROSITE" id="PS50886">
    <property type="entry name" value="TRBD"/>
    <property type="match status" value="1"/>
</dbReference>
<reference key="1">
    <citation type="journal article" date="2004" name="Nucleic Acids Res.">
        <title>Unique features revealed by the genome sequence of Acinetobacter sp. ADP1, a versatile and naturally transformation competent bacterium.</title>
        <authorList>
            <person name="Barbe V."/>
            <person name="Vallenet D."/>
            <person name="Fonknechten N."/>
            <person name="Kreimeyer A."/>
            <person name="Oztas S."/>
            <person name="Labarre L."/>
            <person name="Cruveiller S."/>
            <person name="Robert C."/>
            <person name="Duprat S."/>
            <person name="Wincker P."/>
            <person name="Ornston L.N."/>
            <person name="Weissenbach J."/>
            <person name="Marliere P."/>
            <person name="Cohen G.N."/>
            <person name="Medigue C."/>
        </authorList>
    </citation>
    <scope>NUCLEOTIDE SEQUENCE [LARGE SCALE GENOMIC DNA]</scope>
    <source>
        <strain>ATCC 33305 / BD413 / ADP1</strain>
    </source>
</reference>
<organism>
    <name type="scientific">Acinetobacter baylyi (strain ATCC 33305 / BD413 / ADP1)</name>
    <dbReference type="NCBI Taxonomy" id="62977"/>
    <lineage>
        <taxon>Bacteria</taxon>
        <taxon>Pseudomonadati</taxon>
        <taxon>Pseudomonadota</taxon>
        <taxon>Gammaproteobacteria</taxon>
        <taxon>Moraxellales</taxon>
        <taxon>Moraxellaceae</taxon>
        <taxon>Acinetobacter</taxon>
    </lineage>
</organism>
<gene>
    <name evidence="1" type="primary">pheT</name>
    <name type="ordered locus">ACIAD3041</name>
</gene>
<comment type="catalytic activity">
    <reaction evidence="1">
        <text>tRNA(Phe) + L-phenylalanine + ATP = L-phenylalanyl-tRNA(Phe) + AMP + diphosphate + H(+)</text>
        <dbReference type="Rhea" id="RHEA:19413"/>
        <dbReference type="Rhea" id="RHEA-COMP:9668"/>
        <dbReference type="Rhea" id="RHEA-COMP:9699"/>
        <dbReference type="ChEBI" id="CHEBI:15378"/>
        <dbReference type="ChEBI" id="CHEBI:30616"/>
        <dbReference type="ChEBI" id="CHEBI:33019"/>
        <dbReference type="ChEBI" id="CHEBI:58095"/>
        <dbReference type="ChEBI" id="CHEBI:78442"/>
        <dbReference type="ChEBI" id="CHEBI:78531"/>
        <dbReference type="ChEBI" id="CHEBI:456215"/>
        <dbReference type="EC" id="6.1.1.20"/>
    </reaction>
</comment>
<comment type="cofactor">
    <cofactor evidence="1">
        <name>Mg(2+)</name>
        <dbReference type="ChEBI" id="CHEBI:18420"/>
    </cofactor>
    <text evidence="1">Binds 2 magnesium ions per tetramer.</text>
</comment>
<comment type="subunit">
    <text evidence="1">Tetramer of two alpha and two beta subunits.</text>
</comment>
<comment type="subcellular location">
    <subcellularLocation>
        <location evidence="1">Cytoplasm</location>
    </subcellularLocation>
</comment>
<comment type="similarity">
    <text evidence="1">Belongs to the phenylalanyl-tRNA synthetase beta subunit family. Type 1 subfamily.</text>
</comment>
<sequence>MKISESWLRTWVNPAIDSTTLADQLTMLGLEVDELAPVAKPFTGVVVGEVLTVEQHPDADRLRVTTVNIGNGEPLQIVCGAPNLRVGMKAPVATIGAVLPGEFKIKKGKLRGIESQGMLCGASEIDLEDKIDGLLELPEDAPVGLNIREYLKLDDNIIDISITPNRGDCFSIRGIARDLAVLNQLEVTPPDIQAVEATLNEQKQVHLETEGAPRYLGRIIKNVNVKATTPEWMAQALAASGIRTHSILVDVTNYVLMELGQPMHAFDLAKLNGAIHVRQASAQEKLTLLNDQNVELNEDIMVIADDAKVLAIAGIMGGLESSVTDDTQDIFLESAFFAPLAIAGRARRFGLHTDSSQRFERGVDFELPLLAMNRASQLIQQFAGGEFGPITVAENTALLPKREAIELNQQQVSQLLGYEVETDFIADALTRLGCQVAVKAQGEWVVVAPSHRFDITIYQDLIEEVARIHGYDNIQIRLPKIDVKLAKYQDHLELGQLRQTIATLGYQEAISFSFADLKLEKQLNPDVNPLALANPISSDLAVMRSTLLSSLIPCVQHNLNRQQNRVRFFELGLRFDYQNAASIHDLQQTPTLALIAVGSSVPEQWHGKTQPMDFFDLKHDIEQILAAGRVKVEYVRSERAWLHPGQSAEILIAGQSIGYLGRLHPSLENDLDLGVTWVAELDQQAILQSYVSNFTELSRFPSVRRDIALLISDKINVSDIQQLIKQTGGDLLDSTWLFDVYTGQGVEEGKRSLAFALLWQHPSRTLEDAEIKSGMDNIIEVLENTYQATLRAS</sequence>
<name>SYFB_ACIAD</name>
<keyword id="KW-0030">Aminoacyl-tRNA synthetase</keyword>
<keyword id="KW-0067">ATP-binding</keyword>
<keyword id="KW-0963">Cytoplasm</keyword>
<keyword id="KW-0436">Ligase</keyword>
<keyword id="KW-0460">Magnesium</keyword>
<keyword id="KW-0479">Metal-binding</keyword>
<keyword id="KW-0547">Nucleotide-binding</keyword>
<keyword id="KW-0648">Protein biosynthesis</keyword>
<keyword id="KW-0694">RNA-binding</keyword>
<keyword id="KW-0820">tRNA-binding</keyword>